<feature type="chain" id="PRO_0000058006" description="Nucleoside permease NupG">
    <location>
        <begin position="1"/>
        <end position="418"/>
    </location>
</feature>
<feature type="transmembrane region" description="Helical" evidence="1">
    <location>
        <begin position="9"/>
        <end position="29"/>
    </location>
</feature>
<feature type="transmembrane region" description="Helical" evidence="1">
    <location>
        <begin position="40"/>
        <end position="60"/>
    </location>
</feature>
<feature type="transmembrane region" description="Helical" evidence="1">
    <location>
        <begin position="70"/>
        <end position="90"/>
    </location>
</feature>
<feature type="transmembrane region" description="Helical" evidence="1">
    <location>
        <begin position="96"/>
        <end position="116"/>
    </location>
</feature>
<feature type="transmembrane region" description="Helical" evidence="1">
    <location>
        <begin position="137"/>
        <end position="157"/>
    </location>
</feature>
<feature type="transmembrane region" description="Helical" evidence="1">
    <location>
        <begin position="162"/>
        <end position="182"/>
    </location>
</feature>
<feature type="transmembrane region" description="Helical" evidence="1">
    <location>
        <begin position="210"/>
        <end position="230"/>
    </location>
</feature>
<feature type="transmembrane region" description="Helical" evidence="1">
    <location>
        <begin position="255"/>
        <end position="275"/>
    </location>
</feature>
<feature type="transmembrane region" description="Helical" evidence="1">
    <location>
        <begin position="283"/>
        <end position="303"/>
    </location>
</feature>
<feature type="transmembrane region" description="Helical" evidence="1">
    <location>
        <begin position="305"/>
        <end position="325"/>
    </location>
</feature>
<feature type="transmembrane region" description="Helical" evidence="1">
    <location>
        <begin position="349"/>
        <end position="369"/>
    </location>
</feature>
<feature type="transmembrane region" description="Helical" evidence="1">
    <location>
        <begin position="382"/>
        <end position="402"/>
    </location>
</feature>
<proteinExistence type="inferred from homology"/>
<sequence length="418" mass="46389">MNLKLQLKILSFLQFCLWGSWLTTLGSYMFVTLKFDGASIGAVYSSLGIAAVFMPALLGIVADKWLSAKWVYAICHTIGAITLFMAAQVTTPEAMFLVILINSFAYMPTLGLINTISYYRLQNAGMDIVTDFPPIRIWGTIGFIMAMWVVSLSGFELSHMQLYIGAALSAILVLFTLTLPHIPVAKQQANQSWTTLLGLDAFALFKNKRMAIFFIFSMLLGAELQITNMFGNTFLHSFDKDPMFASSFIVQHASIIMSISQISETLFILTIPFFLSRYGIKNVMMISIVAWILRFALFAYGDPTPFGTVLLVLSMIVYGCAFDFFNISGSVFVEKEVSPAIRASAQGMFLMMTNGFGCILGGIVSGKVVEMYTQNGITDWQTVWLIFAGYSVVLAFAFMAMFKYKHVRVPTGTQTVSH</sequence>
<comment type="function">
    <text evidence="1">Broad-specificity transporter of purine and pyrimidine nucleosides. Transport is driven by a proton motive force.</text>
</comment>
<comment type="subcellular location">
    <subcellularLocation>
        <location evidence="1">Cell inner membrane</location>
        <topology evidence="1">Multi-pass membrane protein</topology>
    </subcellularLocation>
</comment>
<comment type="similarity">
    <text evidence="1">Belongs to the major facilitator superfamily. Nucleoside:H(+) symporter (NHS) (TC 2.A.1.10) family.</text>
</comment>
<comment type="sequence caution" evidence="2">
    <conflict type="erroneous initiation">
        <sequence resource="EMBL-CDS" id="AAN44442"/>
    </conflict>
</comment>
<comment type="sequence caution" evidence="2">
    <conflict type="erroneous initiation">
        <sequence resource="EMBL-CDS" id="AAP18266"/>
    </conflict>
</comment>
<dbReference type="EMBL" id="AE005674">
    <property type="protein sequence ID" value="AAN44442.1"/>
    <property type="status" value="ALT_INIT"/>
    <property type="molecule type" value="Genomic_DNA"/>
</dbReference>
<dbReference type="EMBL" id="AE014073">
    <property type="protein sequence ID" value="AAP18266.1"/>
    <property type="status" value="ALT_INIT"/>
    <property type="molecule type" value="Genomic_DNA"/>
</dbReference>
<dbReference type="RefSeq" id="NP_708735.1">
    <property type="nucleotide sequence ID" value="NC_004337.2"/>
</dbReference>
<dbReference type="RefSeq" id="WP_001049791.1">
    <property type="nucleotide sequence ID" value="NZ_WPGW01000067.1"/>
</dbReference>
<dbReference type="SMR" id="P0AFF5"/>
<dbReference type="STRING" id="198214.SF2961"/>
<dbReference type="PaxDb" id="198214-SF2961"/>
<dbReference type="GeneID" id="1027502"/>
<dbReference type="GeneID" id="93779027"/>
<dbReference type="KEGG" id="sfl:SF2961"/>
<dbReference type="KEGG" id="sfx:S3164"/>
<dbReference type="PATRIC" id="fig|198214.7.peg.3521"/>
<dbReference type="HOGENOM" id="CLU_013133_1_2_6"/>
<dbReference type="Proteomes" id="UP000001006">
    <property type="component" value="Chromosome"/>
</dbReference>
<dbReference type="Proteomes" id="UP000002673">
    <property type="component" value="Chromosome"/>
</dbReference>
<dbReference type="GO" id="GO:0005886">
    <property type="term" value="C:plasma membrane"/>
    <property type="evidence" value="ECO:0007669"/>
    <property type="project" value="UniProtKB-SubCell"/>
</dbReference>
<dbReference type="GO" id="GO:0015212">
    <property type="term" value="F:cytidine transmembrane transporter activity"/>
    <property type="evidence" value="ECO:0007669"/>
    <property type="project" value="TreeGrafter"/>
</dbReference>
<dbReference type="GO" id="GO:0015506">
    <property type="term" value="F:nucleoside:proton symporter activity"/>
    <property type="evidence" value="ECO:0007669"/>
    <property type="project" value="UniProtKB-UniRule"/>
</dbReference>
<dbReference type="GO" id="GO:0015213">
    <property type="term" value="F:uridine transmembrane transporter activity"/>
    <property type="evidence" value="ECO:0007669"/>
    <property type="project" value="TreeGrafter"/>
</dbReference>
<dbReference type="CDD" id="cd06177">
    <property type="entry name" value="MFS_NHS"/>
    <property type="match status" value="1"/>
</dbReference>
<dbReference type="FunFam" id="1.20.1250.20:FF:000012">
    <property type="entry name" value="Nucleoside permease NupG"/>
    <property type="match status" value="1"/>
</dbReference>
<dbReference type="FunFam" id="1.20.1250.20:FF:000015">
    <property type="entry name" value="Nucleoside permease NupG"/>
    <property type="match status" value="1"/>
</dbReference>
<dbReference type="Gene3D" id="1.20.1250.20">
    <property type="entry name" value="MFS general substrate transporter like domains"/>
    <property type="match status" value="2"/>
</dbReference>
<dbReference type="HAMAP" id="MF_02049">
    <property type="entry name" value="NupG"/>
    <property type="match status" value="1"/>
</dbReference>
<dbReference type="InterPro" id="IPR020846">
    <property type="entry name" value="MFS_dom"/>
</dbReference>
<dbReference type="InterPro" id="IPR036259">
    <property type="entry name" value="MFS_trans_sf"/>
</dbReference>
<dbReference type="InterPro" id="IPR004740">
    <property type="entry name" value="Nuc_H_symport"/>
</dbReference>
<dbReference type="InterPro" id="IPR033667">
    <property type="entry name" value="NupG"/>
</dbReference>
<dbReference type="NCBIfam" id="TIGR00889">
    <property type="entry name" value="2A0110"/>
    <property type="match status" value="1"/>
</dbReference>
<dbReference type="PANTHER" id="PTHR23522">
    <property type="entry name" value="BLL5896 PROTEIN"/>
    <property type="match status" value="1"/>
</dbReference>
<dbReference type="PANTHER" id="PTHR23522:SF4">
    <property type="entry name" value="NUCLEOSIDE PERMEASE NUPG-RELATED"/>
    <property type="match status" value="1"/>
</dbReference>
<dbReference type="Pfam" id="PF03825">
    <property type="entry name" value="Nuc_H_symport"/>
    <property type="match status" value="1"/>
</dbReference>
<dbReference type="SUPFAM" id="SSF103473">
    <property type="entry name" value="MFS general substrate transporter"/>
    <property type="match status" value="1"/>
</dbReference>
<dbReference type="PROSITE" id="PS50850">
    <property type="entry name" value="MFS"/>
    <property type="match status" value="1"/>
</dbReference>
<gene>
    <name evidence="1" type="primary">nupG</name>
    <name type="ordered locus">SF2961</name>
    <name type="ordered locus">S3164</name>
</gene>
<organism>
    <name type="scientific">Shigella flexneri</name>
    <dbReference type="NCBI Taxonomy" id="623"/>
    <lineage>
        <taxon>Bacteria</taxon>
        <taxon>Pseudomonadati</taxon>
        <taxon>Pseudomonadota</taxon>
        <taxon>Gammaproteobacteria</taxon>
        <taxon>Enterobacterales</taxon>
        <taxon>Enterobacteriaceae</taxon>
        <taxon>Shigella</taxon>
    </lineage>
</organism>
<name>NUPG_SHIFL</name>
<evidence type="ECO:0000255" key="1">
    <source>
        <dbReference type="HAMAP-Rule" id="MF_02049"/>
    </source>
</evidence>
<evidence type="ECO:0000305" key="2"/>
<accession>P0AFF5</accession>
<accession>P09452</accession>
<accession>P76653</accession>
<keyword id="KW-0997">Cell inner membrane</keyword>
<keyword id="KW-1003">Cell membrane</keyword>
<keyword id="KW-0472">Membrane</keyword>
<keyword id="KW-1185">Reference proteome</keyword>
<keyword id="KW-0769">Symport</keyword>
<keyword id="KW-0812">Transmembrane</keyword>
<keyword id="KW-1133">Transmembrane helix</keyword>
<keyword id="KW-0813">Transport</keyword>
<reference key="1">
    <citation type="journal article" date="2002" name="Nucleic Acids Res.">
        <title>Genome sequence of Shigella flexneri 2a: insights into pathogenicity through comparison with genomes of Escherichia coli K12 and O157.</title>
        <authorList>
            <person name="Jin Q."/>
            <person name="Yuan Z."/>
            <person name="Xu J."/>
            <person name="Wang Y."/>
            <person name="Shen Y."/>
            <person name="Lu W."/>
            <person name="Wang J."/>
            <person name="Liu H."/>
            <person name="Yang J."/>
            <person name="Yang F."/>
            <person name="Zhang X."/>
            <person name="Zhang J."/>
            <person name="Yang G."/>
            <person name="Wu H."/>
            <person name="Qu D."/>
            <person name="Dong J."/>
            <person name="Sun L."/>
            <person name="Xue Y."/>
            <person name="Zhao A."/>
            <person name="Gao Y."/>
            <person name="Zhu J."/>
            <person name="Kan B."/>
            <person name="Ding K."/>
            <person name="Chen S."/>
            <person name="Cheng H."/>
            <person name="Yao Z."/>
            <person name="He B."/>
            <person name="Chen R."/>
            <person name="Ma D."/>
            <person name="Qiang B."/>
            <person name="Wen Y."/>
            <person name="Hou Y."/>
            <person name="Yu J."/>
        </authorList>
    </citation>
    <scope>NUCLEOTIDE SEQUENCE [LARGE SCALE GENOMIC DNA]</scope>
    <source>
        <strain>301 / Serotype 2a</strain>
    </source>
</reference>
<reference key="2">
    <citation type="journal article" date="2003" name="Infect. Immun.">
        <title>Complete genome sequence and comparative genomics of Shigella flexneri serotype 2a strain 2457T.</title>
        <authorList>
            <person name="Wei J."/>
            <person name="Goldberg M.B."/>
            <person name="Burland V."/>
            <person name="Venkatesan M.M."/>
            <person name="Deng W."/>
            <person name="Fournier G."/>
            <person name="Mayhew G.F."/>
            <person name="Plunkett G. III"/>
            <person name="Rose D.J."/>
            <person name="Darling A."/>
            <person name="Mau B."/>
            <person name="Perna N.T."/>
            <person name="Payne S.M."/>
            <person name="Runyen-Janecky L.J."/>
            <person name="Zhou S."/>
            <person name="Schwartz D.C."/>
            <person name="Blattner F.R."/>
        </authorList>
    </citation>
    <scope>NUCLEOTIDE SEQUENCE [LARGE SCALE GENOMIC DNA]</scope>
    <source>
        <strain>ATCC 700930 / 2457T / Serotype 2a</strain>
    </source>
</reference>
<protein>
    <recommendedName>
        <fullName evidence="1">Nucleoside permease NupG</fullName>
    </recommendedName>
</protein>